<dbReference type="EMBL" id="CP001488">
    <property type="protein sequence ID" value="ACO00201.1"/>
    <property type="molecule type" value="Genomic_DNA"/>
</dbReference>
<dbReference type="RefSeq" id="WP_002963543.1">
    <property type="nucleotide sequence ID" value="NC_012441.1"/>
</dbReference>
<dbReference type="SMR" id="C0RH93"/>
<dbReference type="KEGG" id="bmi:BMEA_A0416"/>
<dbReference type="HOGENOM" id="CLU_041018_0_2_5"/>
<dbReference type="Proteomes" id="UP000001748">
    <property type="component" value="Chromosome I"/>
</dbReference>
<dbReference type="GO" id="GO:0005886">
    <property type="term" value="C:plasma membrane"/>
    <property type="evidence" value="ECO:0007669"/>
    <property type="project" value="UniProtKB-SubCell"/>
</dbReference>
<dbReference type="GO" id="GO:0045259">
    <property type="term" value="C:proton-transporting ATP synthase complex"/>
    <property type="evidence" value="ECO:0007669"/>
    <property type="project" value="UniProtKB-KW"/>
</dbReference>
<dbReference type="GO" id="GO:0046933">
    <property type="term" value="F:proton-transporting ATP synthase activity, rotational mechanism"/>
    <property type="evidence" value="ECO:0007669"/>
    <property type="project" value="UniProtKB-UniRule"/>
</dbReference>
<dbReference type="CDD" id="cd00310">
    <property type="entry name" value="ATP-synt_Fo_a_6"/>
    <property type="match status" value="1"/>
</dbReference>
<dbReference type="FunFam" id="1.20.120.220:FF:000003">
    <property type="entry name" value="ATP synthase subunit a"/>
    <property type="match status" value="1"/>
</dbReference>
<dbReference type="Gene3D" id="1.20.120.220">
    <property type="entry name" value="ATP synthase, F0 complex, subunit A"/>
    <property type="match status" value="1"/>
</dbReference>
<dbReference type="HAMAP" id="MF_01393">
    <property type="entry name" value="ATP_synth_a_bact"/>
    <property type="match status" value="1"/>
</dbReference>
<dbReference type="InterPro" id="IPR000568">
    <property type="entry name" value="ATP_synth_F0_asu"/>
</dbReference>
<dbReference type="InterPro" id="IPR023011">
    <property type="entry name" value="ATP_synth_F0_asu_AS"/>
</dbReference>
<dbReference type="InterPro" id="IPR045083">
    <property type="entry name" value="ATP_synth_F0_asu_bact/mt"/>
</dbReference>
<dbReference type="InterPro" id="IPR035908">
    <property type="entry name" value="F0_ATP_A_sf"/>
</dbReference>
<dbReference type="NCBIfam" id="TIGR01131">
    <property type="entry name" value="ATP_synt_6_or_A"/>
    <property type="match status" value="1"/>
</dbReference>
<dbReference type="NCBIfam" id="NF004482">
    <property type="entry name" value="PRK05815.2-4"/>
    <property type="match status" value="1"/>
</dbReference>
<dbReference type="PANTHER" id="PTHR11410">
    <property type="entry name" value="ATP SYNTHASE SUBUNIT A"/>
    <property type="match status" value="1"/>
</dbReference>
<dbReference type="PANTHER" id="PTHR11410:SF0">
    <property type="entry name" value="ATP SYNTHASE SUBUNIT A"/>
    <property type="match status" value="1"/>
</dbReference>
<dbReference type="Pfam" id="PF00119">
    <property type="entry name" value="ATP-synt_A"/>
    <property type="match status" value="1"/>
</dbReference>
<dbReference type="PRINTS" id="PR00123">
    <property type="entry name" value="ATPASEA"/>
</dbReference>
<dbReference type="SUPFAM" id="SSF81336">
    <property type="entry name" value="F1F0 ATP synthase subunit A"/>
    <property type="match status" value="1"/>
</dbReference>
<dbReference type="PROSITE" id="PS00449">
    <property type="entry name" value="ATPASE_A"/>
    <property type="match status" value="1"/>
</dbReference>
<sequence>MANDPIHQFQVSRWIPIDVGGVDLSFTNVSAFMVATVVLASGFLYLTSSGRGLIPTRLQSVSEMAYEFVATSLRDSAGSKGMKFFPFVFSLFMFVLVANFIGLFPYFYTVTSQIIVTFALSLLVIGTVIFYGFFKHGFGFLKLFVPSGVPGIIVPLVVLIEIISFLSRPISLSVRLFANMLAGHITLKVFAGFVVSLSSLGALGIGGAVLPLLMTVAITALEFLVAFLQAYVFTVLTCMYINDAVHPGH</sequence>
<keyword id="KW-0066">ATP synthesis</keyword>
<keyword id="KW-0997">Cell inner membrane</keyword>
<keyword id="KW-1003">Cell membrane</keyword>
<keyword id="KW-0138">CF(0)</keyword>
<keyword id="KW-0375">Hydrogen ion transport</keyword>
<keyword id="KW-0406">Ion transport</keyword>
<keyword id="KW-0472">Membrane</keyword>
<keyword id="KW-0812">Transmembrane</keyword>
<keyword id="KW-1133">Transmembrane helix</keyword>
<keyword id="KW-0813">Transport</keyword>
<name>ATP6_BRUMB</name>
<comment type="function">
    <text evidence="1">Key component of the proton channel; it plays a direct role in the translocation of protons across the membrane.</text>
</comment>
<comment type="subunit">
    <text evidence="1">F-type ATPases have 2 components, CF(1) - the catalytic core - and CF(0) - the membrane proton channel. CF(1) has five subunits: alpha(3), beta(3), gamma(1), delta(1), epsilon(1). CF(0) has three main subunits: a(1), b(2) and c(9-12). The alpha and beta chains form an alternating ring which encloses part of the gamma chain. CF(1) is attached to CF(0) by a central stalk formed by the gamma and epsilon chains, while a peripheral stalk is formed by the delta and b chains.</text>
</comment>
<comment type="subcellular location">
    <subcellularLocation>
        <location evidence="1">Cell inner membrane</location>
        <topology evidence="1">Multi-pass membrane protein</topology>
    </subcellularLocation>
</comment>
<comment type="similarity">
    <text evidence="1">Belongs to the ATPase A chain family.</text>
</comment>
<protein>
    <recommendedName>
        <fullName evidence="1">ATP synthase subunit a</fullName>
    </recommendedName>
    <alternativeName>
        <fullName evidence="1">ATP synthase F0 sector subunit a</fullName>
    </alternativeName>
    <alternativeName>
        <fullName evidence="1">F-ATPase subunit 6</fullName>
    </alternativeName>
</protein>
<gene>
    <name evidence="1" type="primary">atpB</name>
    <name type="ordered locus">BMEA_A0416</name>
</gene>
<organism>
    <name type="scientific">Brucella melitensis biotype 2 (strain ATCC 23457)</name>
    <dbReference type="NCBI Taxonomy" id="546272"/>
    <lineage>
        <taxon>Bacteria</taxon>
        <taxon>Pseudomonadati</taxon>
        <taxon>Pseudomonadota</taxon>
        <taxon>Alphaproteobacteria</taxon>
        <taxon>Hyphomicrobiales</taxon>
        <taxon>Brucellaceae</taxon>
        <taxon>Brucella/Ochrobactrum group</taxon>
        <taxon>Brucella</taxon>
    </lineage>
</organism>
<accession>C0RH93</accession>
<evidence type="ECO:0000255" key="1">
    <source>
        <dbReference type="HAMAP-Rule" id="MF_01393"/>
    </source>
</evidence>
<feature type="chain" id="PRO_1000184277" description="ATP synthase subunit a">
    <location>
        <begin position="1"/>
        <end position="249"/>
    </location>
</feature>
<feature type="transmembrane region" description="Helical" evidence="1">
    <location>
        <begin position="26"/>
        <end position="46"/>
    </location>
</feature>
<feature type="transmembrane region" description="Helical" evidence="1">
    <location>
        <begin position="84"/>
        <end position="104"/>
    </location>
</feature>
<feature type="transmembrane region" description="Helical" evidence="1">
    <location>
        <begin position="114"/>
        <end position="134"/>
    </location>
</feature>
<feature type="transmembrane region" description="Helical" evidence="1">
    <location>
        <begin position="143"/>
        <end position="163"/>
    </location>
</feature>
<feature type="transmembrane region" description="Helical" evidence="1">
    <location>
        <begin position="185"/>
        <end position="205"/>
    </location>
</feature>
<feature type="transmembrane region" description="Helical" evidence="1">
    <location>
        <begin position="208"/>
        <end position="228"/>
    </location>
</feature>
<proteinExistence type="inferred from homology"/>
<reference key="1">
    <citation type="submission" date="2009-03" db="EMBL/GenBank/DDBJ databases">
        <title>Brucella melitensis ATCC 23457 whole genome shotgun sequencing project.</title>
        <authorList>
            <person name="Setubal J.C."/>
            <person name="Boyle S."/>
            <person name="Crasta O.R."/>
            <person name="Gillespie J.J."/>
            <person name="Kenyon R.W."/>
            <person name="Lu J."/>
            <person name="Mane S."/>
            <person name="Nagrani S."/>
            <person name="Shallom J.M."/>
            <person name="Shallom S."/>
            <person name="Shukla M."/>
            <person name="Snyder E.E."/>
            <person name="Sobral B.W."/>
            <person name="Wattam A.R."/>
            <person name="Will R."/>
            <person name="Williams K."/>
            <person name="Yoo H."/>
            <person name="Munk C."/>
            <person name="Tapia R."/>
            <person name="Han C."/>
            <person name="Detter J.C."/>
            <person name="Bruce D."/>
            <person name="Brettin T.S."/>
        </authorList>
    </citation>
    <scope>NUCLEOTIDE SEQUENCE [LARGE SCALE GENOMIC DNA]</scope>
    <source>
        <strain>ATCC 23457</strain>
    </source>
</reference>